<dbReference type="EC" id="3.4.25.2" evidence="1"/>
<dbReference type="EMBL" id="CP001111">
    <property type="protein sequence ID" value="ACF53171.1"/>
    <property type="molecule type" value="Genomic_DNA"/>
</dbReference>
<dbReference type="RefSeq" id="WP_005411093.1">
    <property type="nucleotide sequence ID" value="NC_011071.1"/>
</dbReference>
<dbReference type="SMR" id="B4SJN0"/>
<dbReference type="STRING" id="391008.Smal_3472"/>
<dbReference type="MEROPS" id="T01.006"/>
<dbReference type="GeneID" id="97262714"/>
<dbReference type="KEGG" id="smt:Smal_3472"/>
<dbReference type="eggNOG" id="COG5405">
    <property type="taxonomic scope" value="Bacteria"/>
</dbReference>
<dbReference type="HOGENOM" id="CLU_093872_1_0_6"/>
<dbReference type="OrthoDB" id="9804884at2"/>
<dbReference type="Proteomes" id="UP000001867">
    <property type="component" value="Chromosome"/>
</dbReference>
<dbReference type="GO" id="GO:0009376">
    <property type="term" value="C:HslUV protease complex"/>
    <property type="evidence" value="ECO:0007669"/>
    <property type="project" value="UniProtKB-UniRule"/>
</dbReference>
<dbReference type="GO" id="GO:0005839">
    <property type="term" value="C:proteasome core complex"/>
    <property type="evidence" value="ECO:0007669"/>
    <property type="project" value="InterPro"/>
</dbReference>
<dbReference type="GO" id="GO:0046872">
    <property type="term" value="F:metal ion binding"/>
    <property type="evidence" value="ECO:0007669"/>
    <property type="project" value="UniProtKB-KW"/>
</dbReference>
<dbReference type="GO" id="GO:0004298">
    <property type="term" value="F:threonine-type endopeptidase activity"/>
    <property type="evidence" value="ECO:0007669"/>
    <property type="project" value="UniProtKB-KW"/>
</dbReference>
<dbReference type="GO" id="GO:0051603">
    <property type="term" value="P:proteolysis involved in protein catabolic process"/>
    <property type="evidence" value="ECO:0007669"/>
    <property type="project" value="InterPro"/>
</dbReference>
<dbReference type="CDD" id="cd01913">
    <property type="entry name" value="protease_HslV"/>
    <property type="match status" value="1"/>
</dbReference>
<dbReference type="FunFam" id="3.60.20.10:FF:000002">
    <property type="entry name" value="ATP-dependent protease subunit HslV"/>
    <property type="match status" value="1"/>
</dbReference>
<dbReference type="Gene3D" id="3.60.20.10">
    <property type="entry name" value="Glutamine Phosphoribosylpyrophosphate, subunit 1, domain 1"/>
    <property type="match status" value="1"/>
</dbReference>
<dbReference type="HAMAP" id="MF_00248">
    <property type="entry name" value="HslV"/>
    <property type="match status" value="1"/>
</dbReference>
<dbReference type="InterPro" id="IPR022281">
    <property type="entry name" value="ATP-dep_Prtase_HsIV_su"/>
</dbReference>
<dbReference type="InterPro" id="IPR029055">
    <property type="entry name" value="Ntn_hydrolases_N"/>
</dbReference>
<dbReference type="InterPro" id="IPR001353">
    <property type="entry name" value="Proteasome_sua/b"/>
</dbReference>
<dbReference type="InterPro" id="IPR023333">
    <property type="entry name" value="Proteasome_suB-type"/>
</dbReference>
<dbReference type="NCBIfam" id="TIGR03692">
    <property type="entry name" value="ATP_dep_HslV"/>
    <property type="match status" value="1"/>
</dbReference>
<dbReference type="NCBIfam" id="NF003964">
    <property type="entry name" value="PRK05456.1"/>
    <property type="match status" value="1"/>
</dbReference>
<dbReference type="PANTHER" id="PTHR32194:SF0">
    <property type="entry name" value="ATP-DEPENDENT PROTEASE SUBUNIT HSLV"/>
    <property type="match status" value="1"/>
</dbReference>
<dbReference type="PANTHER" id="PTHR32194">
    <property type="entry name" value="METALLOPROTEASE TLDD"/>
    <property type="match status" value="1"/>
</dbReference>
<dbReference type="Pfam" id="PF00227">
    <property type="entry name" value="Proteasome"/>
    <property type="match status" value="1"/>
</dbReference>
<dbReference type="PIRSF" id="PIRSF039093">
    <property type="entry name" value="HslV"/>
    <property type="match status" value="1"/>
</dbReference>
<dbReference type="SUPFAM" id="SSF56235">
    <property type="entry name" value="N-terminal nucleophile aminohydrolases (Ntn hydrolases)"/>
    <property type="match status" value="1"/>
</dbReference>
<dbReference type="PROSITE" id="PS51476">
    <property type="entry name" value="PROTEASOME_BETA_2"/>
    <property type="match status" value="1"/>
</dbReference>
<gene>
    <name evidence="1" type="primary">hslV</name>
    <name type="ordered locus">Smal_3472</name>
</gene>
<evidence type="ECO:0000255" key="1">
    <source>
        <dbReference type="HAMAP-Rule" id="MF_00248"/>
    </source>
</evidence>
<name>HSLV_STRM5</name>
<feature type="chain" id="PRO_1000100918" description="ATP-dependent protease subunit HslV">
    <location>
        <begin position="1"/>
        <end position="183"/>
    </location>
</feature>
<feature type="active site" evidence="1">
    <location>
        <position position="13"/>
    </location>
</feature>
<feature type="binding site" evidence="1">
    <location>
        <position position="168"/>
    </location>
    <ligand>
        <name>Na(+)</name>
        <dbReference type="ChEBI" id="CHEBI:29101"/>
    </ligand>
</feature>
<feature type="binding site" evidence="1">
    <location>
        <position position="171"/>
    </location>
    <ligand>
        <name>Na(+)</name>
        <dbReference type="ChEBI" id="CHEBI:29101"/>
    </ligand>
</feature>
<feature type="binding site" evidence="1">
    <location>
        <position position="174"/>
    </location>
    <ligand>
        <name>Na(+)</name>
        <dbReference type="ChEBI" id="CHEBI:29101"/>
    </ligand>
</feature>
<reference key="1">
    <citation type="submission" date="2008-06" db="EMBL/GenBank/DDBJ databases">
        <title>Complete sequence of Stenotrophomonas maltophilia R551-3.</title>
        <authorList>
            <consortium name="US DOE Joint Genome Institute"/>
            <person name="Lucas S."/>
            <person name="Copeland A."/>
            <person name="Lapidus A."/>
            <person name="Glavina del Rio T."/>
            <person name="Dalin E."/>
            <person name="Tice H."/>
            <person name="Pitluck S."/>
            <person name="Chain P."/>
            <person name="Malfatti S."/>
            <person name="Shin M."/>
            <person name="Vergez L."/>
            <person name="Lang D."/>
            <person name="Schmutz J."/>
            <person name="Larimer F."/>
            <person name="Land M."/>
            <person name="Hauser L."/>
            <person name="Kyrpides N."/>
            <person name="Mikhailova N."/>
            <person name="Taghavi S."/>
            <person name="Monchy S."/>
            <person name="Newman L."/>
            <person name="Vangronsveld J."/>
            <person name="van der Lelie D."/>
            <person name="Richardson P."/>
        </authorList>
    </citation>
    <scope>NUCLEOTIDE SEQUENCE [LARGE SCALE GENOMIC DNA]</scope>
    <source>
        <strain>R551-3</strain>
    </source>
</reference>
<proteinExistence type="inferred from homology"/>
<comment type="function">
    <text evidence="1">Protease subunit of a proteasome-like degradation complex believed to be a general protein degrading machinery.</text>
</comment>
<comment type="catalytic activity">
    <reaction evidence="1">
        <text>ATP-dependent cleavage of peptide bonds with broad specificity.</text>
        <dbReference type="EC" id="3.4.25.2"/>
    </reaction>
</comment>
<comment type="activity regulation">
    <text evidence="1">Allosterically activated by HslU binding.</text>
</comment>
<comment type="subunit">
    <text evidence="1">A double ring-shaped homohexamer of HslV is capped on each side by a ring-shaped HslU homohexamer. The assembly of the HslU/HslV complex is dependent on binding of ATP.</text>
</comment>
<comment type="subcellular location">
    <subcellularLocation>
        <location evidence="1">Cytoplasm</location>
    </subcellularLocation>
</comment>
<comment type="similarity">
    <text evidence="1">Belongs to the peptidase T1B family. HslV subfamily.</text>
</comment>
<accession>B4SJN0</accession>
<keyword id="KW-0021">Allosteric enzyme</keyword>
<keyword id="KW-0963">Cytoplasm</keyword>
<keyword id="KW-0378">Hydrolase</keyword>
<keyword id="KW-0479">Metal-binding</keyword>
<keyword id="KW-0645">Protease</keyword>
<keyword id="KW-0915">Sodium</keyword>
<keyword id="KW-0888">Threonine protease</keyword>
<sequence length="183" mass="19448">MDPSQNPNVFHATTIVCVRRGEHVAIAGDGQVTLGHTVMKGNARKVRRLGRDGQVLAGFAGAAADAFTLFELFEAKLEKHGQLQRAAVELAKDWRTERRLGKLEALLAVADKETSLIISGTGDVIEPEDGIIAIGSGGSYALSAARALMAHTELDARTIASEAIGIAGDICIYTNRNVVVEEL</sequence>
<protein>
    <recommendedName>
        <fullName evidence="1">ATP-dependent protease subunit HslV</fullName>
        <ecNumber evidence="1">3.4.25.2</ecNumber>
    </recommendedName>
</protein>
<organism>
    <name type="scientific">Stenotrophomonas maltophilia (strain R551-3)</name>
    <dbReference type="NCBI Taxonomy" id="391008"/>
    <lineage>
        <taxon>Bacteria</taxon>
        <taxon>Pseudomonadati</taxon>
        <taxon>Pseudomonadota</taxon>
        <taxon>Gammaproteobacteria</taxon>
        <taxon>Lysobacterales</taxon>
        <taxon>Lysobacteraceae</taxon>
        <taxon>Stenotrophomonas</taxon>
        <taxon>Stenotrophomonas maltophilia group</taxon>
    </lineage>
</organism>